<keyword id="KW-0030">Aminoacyl-tRNA synthetase</keyword>
<keyword id="KW-0067">ATP-binding</keyword>
<keyword id="KW-0963">Cytoplasm</keyword>
<keyword id="KW-0436">Ligase</keyword>
<keyword id="KW-0547">Nucleotide-binding</keyword>
<keyword id="KW-0648">Protein biosynthesis</keyword>
<keyword id="KW-1185">Reference proteome</keyword>
<comment type="function">
    <text evidence="1">Catalyzes the attachment of tryptophan to tRNA(Trp).</text>
</comment>
<comment type="catalytic activity">
    <reaction evidence="1">
        <text>tRNA(Trp) + L-tryptophan + ATP = L-tryptophyl-tRNA(Trp) + AMP + diphosphate + H(+)</text>
        <dbReference type="Rhea" id="RHEA:24080"/>
        <dbReference type="Rhea" id="RHEA-COMP:9671"/>
        <dbReference type="Rhea" id="RHEA-COMP:9705"/>
        <dbReference type="ChEBI" id="CHEBI:15378"/>
        <dbReference type="ChEBI" id="CHEBI:30616"/>
        <dbReference type="ChEBI" id="CHEBI:33019"/>
        <dbReference type="ChEBI" id="CHEBI:57912"/>
        <dbReference type="ChEBI" id="CHEBI:78442"/>
        <dbReference type="ChEBI" id="CHEBI:78535"/>
        <dbReference type="ChEBI" id="CHEBI:456215"/>
        <dbReference type="EC" id="6.1.1.2"/>
    </reaction>
</comment>
<comment type="subunit">
    <text evidence="1">Homodimer.</text>
</comment>
<comment type="subcellular location">
    <subcellularLocation>
        <location evidence="1">Cytoplasm</location>
    </subcellularLocation>
</comment>
<comment type="similarity">
    <text evidence="1">Belongs to the class-I aminoacyl-tRNA synthetase family.</text>
</comment>
<protein>
    <recommendedName>
        <fullName evidence="1">Tryptophan--tRNA ligase</fullName>
        <ecNumber evidence="1">6.1.1.2</ecNumber>
    </recommendedName>
    <alternativeName>
        <fullName evidence="1">Tryptophanyl-tRNA synthetase</fullName>
        <shortName evidence="1">TrpRS</shortName>
    </alternativeName>
</protein>
<evidence type="ECO:0000255" key="1">
    <source>
        <dbReference type="HAMAP-Rule" id="MF_00140"/>
    </source>
</evidence>
<gene>
    <name evidence="1" type="primary">trpS</name>
    <name type="ordered locus">TWT_686</name>
</gene>
<dbReference type="EC" id="6.1.1.2" evidence="1"/>
<dbReference type="EMBL" id="AE014184">
    <property type="protein sequence ID" value="AAO44783.1"/>
    <property type="molecule type" value="Genomic_DNA"/>
</dbReference>
<dbReference type="RefSeq" id="WP_011102729.1">
    <property type="nucleotide sequence ID" value="NC_004572.3"/>
</dbReference>
<dbReference type="SMR" id="Q83FN1"/>
<dbReference type="STRING" id="203267.TWT_686"/>
<dbReference type="KEGG" id="twh:TWT_686"/>
<dbReference type="eggNOG" id="COG0180">
    <property type="taxonomic scope" value="Bacteria"/>
</dbReference>
<dbReference type="HOGENOM" id="CLU_029244_1_1_11"/>
<dbReference type="OrthoDB" id="9801042at2"/>
<dbReference type="Proteomes" id="UP000002200">
    <property type="component" value="Chromosome"/>
</dbReference>
<dbReference type="GO" id="GO:0005829">
    <property type="term" value="C:cytosol"/>
    <property type="evidence" value="ECO:0007669"/>
    <property type="project" value="TreeGrafter"/>
</dbReference>
<dbReference type="GO" id="GO:0005524">
    <property type="term" value="F:ATP binding"/>
    <property type="evidence" value="ECO:0007669"/>
    <property type="project" value="UniProtKB-UniRule"/>
</dbReference>
<dbReference type="GO" id="GO:0004830">
    <property type="term" value="F:tryptophan-tRNA ligase activity"/>
    <property type="evidence" value="ECO:0007669"/>
    <property type="project" value="UniProtKB-UniRule"/>
</dbReference>
<dbReference type="GO" id="GO:0006436">
    <property type="term" value="P:tryptophanyl-tRNA aminoacylation"/>
    <property type="evidence" value="ECO:0007669"/>
    <property type="project" value="UniProtKB-UniRule"/>
</dbReference>
<dbReference type="CDD" id="cd00806">
    <property type="entry name" value="TrpRS_core"/>
    <property type="match status" value="1"/>
</dbReference>
<dbReference type="Gene3D" id="3.40.50.620">
    <property type="entry name" value="HUPs"/>
    <property type="match status" value="1"/>
</dbReference>
<dbReference type="Gene3D" id="1.10.240.10">
    <property type="entry name" value="Tyrosyl-Transfer RNA Synthetase"/>
    <property type="match status" value="1"/>
</dbReference>
<dbReference type="HAMAP" id="MF_00140_B">
    <property type="entry name" value="Trp_tRNA_synth_B"/>
    <property type="match status" value="1"/>
</dbReference>
<dbReference type="InterPro" id="IPR001412">
    <property type="entry name" value="aa-tRNA-synth_I_CS"/>
</dbReference>
<dbReference type="InterPro" id="IPR002305">
    <property type="entry name" value="aa-tRNA-synth_Ic"/>
</dbReference>
<dbReference type="InterPro" id="IPR014729">
    <property type="entry name" value="Rossmann-like_a/b/a_fold"/>
</dbReference>
<dbReference type="InterPro" id="IPR002306">
    <property type="entry name" value="Trp-tRNA-ligase"/>
</dbReference>
<dbReference type="InterPro" id="IPR024109">
    <property type="entry name" value="Trp-tRNA-ligase_bac-type"/>
</dbReference>
<dbReference type="InterPro" id="IPR050203">
    <property type="entry name" value="Trp-tRNA_synthetase"/>
</dbReference>
<dbReference type="NCBIfam" id="TIGR00233">
    <property type="entry name" value="trpS"/>
    <property type="match status" value="1"/>
</dbReference>
<dbReference type="PANTHER" id="PTHR43766">
    <property type="entry name" value="TRYPTOPHAN--TRNA LIGASE, MITOCHONDRIAL"/>
    <property type="match status" value="1"/>
</dbReference>
<dbReference type="PANTHER" id="PTHR43766:SF1">
    <property type="entry name" value="TRYPTOPHAN--TRNA LIGASE, MITOCHONDRIAL"/>
    <property type="match status" value="1"/>
</dbReference>
<dbReference type="Pfam" id="PF00579">
    <property type="entry name" value="tRNA-synt_1b"/>
    <property type="match status" value="1"/>
</dbReference>
<dbReference type="PRINTS" id="PR01039">
    <property type="entry name" value="TRNASYNTHTRP"/>
</dbReference>
<dbReference type="SUPFAM" id="SSF52374">
    <property type="entry name" value="Nucleotidylyl transferase"/>
    <property type="match status" value="1"/>
</dbReference>
<dbReference type="PROSITE" id="PS00178">
    <property type="entry name" value="AA_TRNA_LIGASE_I"/>
    <property type="match status" value="1"/>
</dbReference>
<sequence>MTSSAIRINKKPVVLSGIQPSSGMLHLGNYLGALKSFGRMQDDYTTYFMLANLHSMTFPQNPEVLRENTIRIAAQCIAAGIDPAKSIVFLQSDVYQHNQLAWVLGNVCIFGEAARMTQFKDKSGKQGNISTGLFTYPILMASDILLYDSAFVPVGADQKQHLELTRTLARRFNAQYGQTFLVPQPFECSIRIYDLQDPAVKMSKSSATESGTIFLLDSPDKIVKKIMRSVTDSEDVIGYDRETKPGVSNLVVMYSCLTDCTIEQTVNIYSGKKYSVLKKDLSDILVEVCTTIATRTNELLDDKNYIRKILVTASEQARGVAQKTIDRVYEKLGVY</sequence>
<reference key="1">
    <citation type="journal article" date="2003" name="Genome Res.">
        <title>Tropheryma whipplei twist: a human pathogenic Actinobacteria with a reduced genome.</title>
        <authorList>
            <person name="Raoult D."/>
            <person name="Ogata H."/>
            <person name="Audic S."/>
            <person name="Robert C."/>
            <person name="Suhre K."/>
            <person name="Drancourt M."/>
            <person name="Claverie J.-M."/>
        </authorList>
    </citation>
    <scope>NUCLEOTIDE SEQUENCE [LARGE SCALE GENOMIC DNA]</scope>
    <source>
        <strain>Twist</strain>
    </source>
</reference>
<proteinExistence type="inferred from homology"/>
<name>SYW_TROWT</name>
<organism>
    <name type="scientific">Tropheryma whipplei (strain Twist)</name>
    <name type="common">Whipple's bacillus</name>
    <dbReference type="NCBI Taxonomy" id="203267"/>
    <lineage>
        <taxon>Bacteria</taxon>
        <taxon>Bacillati</taxon>
        <taxon>Actinomycetota</taxon>
        <taxon>Actinomycetes</taxon>
        <taxon>Micrococcales</taxon>
        <taxon>Tropherymataceae</taxon>
        <taxon>Tropheryma</taxon>
    </lineage>
</organism>
<feature type="chain" id="PRO_0000136703" description="Tryptophan--tRNA ligase">
    <location>
        <begin position="1"/>
        <end position="335"/>
    </location>
</feature>
<feature type="short sequence motif" description="'HIGH' region" evidence="1">
    <location>
        <begin position="20"/>
        <end position="29"/>
    </location>
</feature>
<feature type="short sequence motif" description="'KMSKS' region" evidence="1">
    <location>
        <begin position="201"/>
        <end position="205"/>
    </location>
</feature>
<feature type="binding site" evidence="1">
    <location>
        <begin position="19"/>
        <end position="21"/>
    </location>
    <ligand>
        <name>ATP</name>
        <dbReference type="ChEBI" id="CHEBI:30616"/>
    </ligand>
</feature>
<feature type="binding site" evidence="1">
    <location>
        <begin position="28"/>
        <end position="29"/>
    </location>
    <ligand>
        <name>ATP</name>
        <dbReference type="ChEBI" id="CHEBI:30616"/>
    </ligand>
</feature>
<feature type="binding site" evidence="1">
    <location>
        <position position="143"/>
    </location>
    <ligand>
        <name>L-tryptophan</name>
        <dbReference type="ChEBI" id="CHEBI:57912"/>
    </ligand>
</feature>
<feature type="binding site" evidence="1">
    <location>
        <begin position="155"/>
        <end position="157"/>
    </location>
    <ligand>
        <name>ATP</name>
        <dbReference type="ChEBI" id="CHEBI:30616"/>
    </ligand>
</feature>
<feature type="binding site" evidence="1">
    <location>
        <position position="192"/>
    </location>
    <ligand>
        <name>ATP</name>
        <dbReference type="ChEBI" id="CHEBI:30616"/>
    </ligand>
</feature>
<feature type="binding site" evidence="1">
    <location>
        <begin position="201"/>
        <end position="205"/>
    </location>
    <ligand>
        <name>ATP</name>
        <dbReference type="ChEBI" id="CHEBI:30616"/>
    </ligand>
</feature>
<accession>Q83FN1</accession>